<sequence>MGLLSIPYQSKSKLWIAIFLVVWSLISMHFIWQSQANSGLILKNELSSTSSIPHEFEMLIDTNYPKFKPTSGHSGSQTYSNLFKNQDRNAAIFTILKNFDLEQRCQLYFKNVKNDKLIVDPDHDFKFDRFDYLNWDEYRDESIKRLKGDNDEFVATSSDLDTIKKNFDKAKSRIASDLQLLHDYFSHIKIYNQCYIDRNTSFIKKQHELIDGLNWKTSFKRSSFLSGKQIVTEQQMYPWLSQKSPEYNCLATGQTTKFAANKNSFLNTLKNNLNGKGIVMTIADAHIDYCIRLIHLLRYLKNTLPIQIIYTSNDLSAESKSQLHQASVSDFDGLPQQNITLVNVTPAIKPQYLHKFNEFGNKILAILFNTFEEMIFIDADAILIENPEKFFQLTKYKNSGALFFRDRNTSEYRPDHDIEMFLKLMNSQYDEIIFGLLQITEKTMSIPLFDRKISHVMESGLVLLNRKVHFSQPLIMANMNFFEPIRERVYGDKEMFWLSLSIIGDENYQFNSHPAAAIGQLTTYQERVKTFENPPSSFKSQEICANHPAHISDEDNHTLLWFNSGFQFCNQLEKVNYEDEFSHKERYSQFDTIDKFKTFWQSSLVIESAIIPPENTNSNGGDGYEPSVSWKHMEPYCAGYTWCAYSSIGNGDQANDRGLVINYSPEEIEHFKKLGEIWMRGYNYL</sequence>
<proteinExistence type="evidence at transcript level"/>
<accession>Q59YS7</accession>
<accession>A0A1D8PK92</accession>
<name>MNN14_CANAL</name>
<organism>
    <name type="scientific">Candida albicans (strain SC5314 / ATCC MYA-2876)</name>
    <name type="common">Yeast</name>
    <dbReference type="NCBI Taxonomy" id="237561"/>
    <lineage>
        <taxon>Eukaryota</taxon>
        <taxon>Fungi</taxon>
        <taxon>Dikarya</taxon>
        <taxon>Ascomycota</taxon>
        <taxon>Saccharomycotina</taxon>
        <taxon>Pichiomycetes</taxon>
        <taxon>Debaryomycetaceae</taxon>
        <taxon>Candida/Lodderomyces clade</taxon>
        <taxon>Candida</taxon>
    </lineage>
</organism>
<reference key="1">
    <citation type="journal article" date="2004" name="Proc. Natl. Acad. Sci. U.S.A.">
        <title>The diploid genome sequence of Candida albicans.</title>
        <authorList>
            <person name="Jones T."/>
            <person name="Federspiel N.A."/>
            <person name="Chibana H."/>
            <person name="Dungan J."/>
            <person name="Kalman S."/>
            <person name="Magee B.B."/>
            <person name="Newport G."/>
            <person name="Thorstenson Y.R."/>
            <person name="Agabian N."/>
            <person name="Magee P.T."/>
            <person name="Davis R.W."/>
            <person name="Scherer S."/>
        </authorList>
    </citation>
    <scope>NUCLEOTIDE SEQUENCE [LARGE SCALE GENOMIC DNA]</scope>
    <source>
        <strain>SC5314 / ATCC MYA-2876</strain>
    </source>
</reference>
<reference key="2">
    <citation type="journal article" date="2007" name="Genome Biol.">
        <title>Assembly of the Candida albicans genome into sixteen supercontigs aligned on the eight chromosomes.</title>
        <authorList>
            <person name="van het Hoog M."/>
            <person name="Rast T.J."/>
            <person name="Martchenko M."/>
            <person name="Grindle S."/>
            <person name="Dignard D."/>
            <person name="Hogues H."/>
            <person name="Cuomo C."/>
            <person name="Berriman M."/>
            <person name="Scherer S."/>
            <person name="Magee B.B."/>
            <person name="Whiteway M."/>
            <person name="Chibana H."/>
            <person name="Nantel A."/>
            <person name="Magee P.T."/>
        </authorList>
    </citation>
    <scope>GENOME REANNOTATION</scope>
    <source>
        <strain>SC5314 / ATCC MYA-2876</strain>
    </source>
</reference>
<reference key="3">
    <citation type="journal article" date="2013" name="Genome Biol.">
        <title>Assembly of a phased diploid Candida albicans genome facilitates allele-specific measurements and provides a simple model for repeat and indel structure.</title>
        <authorList>
            <person name="Muzzey D."/>
            <person name="Schwartz K."/>
            <person name="Weissman J.S."/>
            <person name="Sherlock G."/>
        </authorList>
    </citation>
    <scope>NUCLEOTIDE SEQUENCE [LARGE SCALE GENOMIC DNA]</scope>
    <scope>GENOME REANNOTATION</scope>
    <source>
        <strain>SC5314 / ATCC MYA-2876</strain>
    </source>
</reference>
<reference key="4">
    <citation type="journal article" date="2012" name="Cell">
        <title>A recently evolved transcriptional network controls biofilm development in Candida albicans.</title>
        <authorList>
            <person name="Nobile C.J."/>
            <person name="Fox E.P."/>
            <person name="Nett J.E."/>
            <person name="Sorrells T.R."/>
            <person name="Mitrovich Q.M."/>
            <person name="Hernday A.D."/>
            <person name="Tuch B.B."/>
            <person name="Andes D.R."/>
            <person name="Johnson A.D."/>
        </authorList>
    </citation>
    <scope>INDUCTION</scope>
</reference>
<reference key="5">
    <citation type="journal article" date="2013" name="BMC Res. Notes">
        <title>Role of the Candida albicans MNN1 gene family in cell wall structure and virulence.</title>
        <authorList>
            <person name="Bates S."/>
            <person name="Hall R.A."/>
            <person name="Cheetham J."/>
            <person name="Netea M.G."/>
            <person name="MacCallum D.M."/>
            <person name="Brown A.J."/>
            <person name="Odds F.C."/>
            <person name="Gow N.A."/>
        </authorList>
    </citation>
    <scope>IDENTIFICATION</scope>
    <scope>DISRUPTION PHENOTYPE</scope>
    <scope>FUNCTION</scope>
</reference>
<keyword id="KW-0325">Glycoprotein</keyword>
<keyword id="KW-0328">Glycosyltransferase</keyword>
<keyword id="KW-0333">Golgi apparatus</keyword>
<keyword id="KW-0472">Membrane</keyword>
<keyword id="KW-1185">Reference proteome</keyword>
<keyword id="KW-0735">Signal-anchor</keyword>
<keyword id="KW-0808">Transferase</keyword>
<keyword id="KW-0812">Transmembrane</keyword>
<keyword id="KW-1133">Transmembrane helix</keyword>
<keyword id="KW-0843">Virulence</keyword>
<protein>
    <recommendedName>
        <fullName>Putative alpha-1,3-mannosyltransferase MNN14</fullName>
        <ecNumber>2.4.1.-</ecNumber>
    </recommendedName>
</protein>
<feature type="chain" id="PRO_0000424327" description="Putative alpha-1,3-mannosyltransferase MNN14">
    <location>
        <begin position="1"/>
        <end position="685"/>
    </location>
</feature>
<feature type="topological domain" description="Cytoplasmic" evidence="2">
    <location>
        <begin position="1"/>
        <end position="13"/>
    </location>
</feature>
<feature type="transmembrane region" description="Helical" evidence="2">
    <location>
        <begin position="14"/>
        <end position="34"/>
    </location>
</feature>
<feature type="topological domain" description="Lumenal" evidence="2">
    <location>
        <begin position="35"/>
        <end position="685"/>
    </location>
</feature>
<feature type="glycosylation site" description="N-linked (GlcNAc...) asparagine" evidence="2">
    <location>
        <position position="199"/>
    </location>
</feature>
<feature type="glycosylation site" description="N-linked (GlcNAc...) asparagine" evidence="2">
    <location>
        <position position="338"/>
    </location>
</feature>
<feature type="glycosylation site" description="N-linked (GlcNAc...) asparagine" evidence="2">
    <location>
        <position position="408"/>
    </location>
</feature>
<feature type="glycosylation site" description="N-linked (GlcNAc...) asparagine" evidence="2">
    <location>
        <position position="556"/>
    </location>
</feature>
<evidence type="ECO:0000250" key="1"/>
<evidence type="ECO:0000255" key="2"/>
<evidence type="ECO:0000269" key="3">
    <source>
    </source>
</evidence>
<evidence type="ECO:0000269" key="4">
    <source>
    </source>
</evidence>
<evidence type="ECO:0000305" key="5"/>
<gene>
    <name type="primary">MNN14</name>
    <name type="ordered locus">CAALFM_C305610WA</name>
    <name type="ORF">CaO19.6996</name>
</gene>
<comment type="function">
    <text evidence="1 4">Responsible for addition of the terminal mannose residues to the outer chain of core N-linked polysaccharides and to O-linked mannotriose. Implicated in late Golgi modifications (By similarity). Involved in virulence.</text>
</comment>
<comment type="pathway">
    <text>Protein modification; protein glycosylation.</text>
</comment>
<comment type="subcellular location">
    <subcellularLocation>
        <location evidence="1">Golgi apparatus membrane</location>
        <topology evidence="1">Single-pass type II membrane protein</topology>
    </subcellularLocation>
</comment>
<comment type="induction">
    <text evidence="3">Induced during biofilm formation.</text>
</comment>
<comment type="disruption phenotype">
    <text evidence="4">Leads to small cell wall defects but displays a severe attenuation of virulence in a murine infection model.</text>
</comment>
<comment type="similarity">
    <text evidence="5">Belongs to the MNN1/MNT family.</text>
</comment>
<dbReference type="EC" id="2.4.1.-"/>
<dbReference type="EMBL" id="CP017625">
    <property type="protein sequence ID" value="AOW28572.1"/>
    <property type="molecule type" value="Genomic_DNA"/>
</dbReference>
<dbReference type="RefSeq" id="XP_714702.1">
    <property type="nucleotide sequence ID" value="XM_709609.1"/>
</dbReference>
<dbReference type="SMR" id="Q59YS7"/>
<dbReference type="FunCoup" id="Q59YS7">
    <property type="interactions" value="55"/>
</dbReference>
<dbReference type="STRING" id="237561.Q59YS7"/>
<dbReference type="GlyCosmos" id="Q59YS7">
    <property type="glycosylation" value="4 sites, No reported glycans"/>
</dbReference>
<dbReference type="EnsemblFungi" id="C3_05610W_A-T">
    <property type="protein sequence ID" value="C3_05610W_A-T-p1"/>
    <property type="gene ID" value="C3_05610W_A"/>
</dbReference>
<dbReference type="GeneID" id="3643651"/>
<dbReference type="KEGG" id="cal:CAALFM_C305610WA"/>
<dbReference type="CGD" id="CAL0000177565">
    <property type="gene designation" value="MNN14"/>
</dbReference>
<dbReference type="VEuPathDB" id="FungiDB:C3_05610W_A"/>
<dbReference type="eggNOG" id="ENOG502RZ48">
    <property type="taxonomic scope" value="Eukaryota"/>
</dbReference>
<dbReference type="HOGENOM" id="CLU_015387_0_1_1"/>
<dbReference type="InParanoid" id="Q59YS7"/>
<dbReference type="OrthoDB" id="430354at2759"/>
<dbReference type="UniPathway" id="UPA00378"/>
<dbReference type="PHI-base" id="PHI:3693"/>
<dbReference type="Proteomes" id="UP000000559">
    <property type="component" value="Chromosome 3"/>
</dbReference>
<dbReference type="GO" id="GO:0005794">
    <property type="term" value="C:Golgi apparatus"/>
    <property type="evidence" value="ECO:0000318"/>
    <property type="project" value="GO_Central"/>
</dbReference>
<dbReference type="GO" id="GO:0000139">
    <property type="term" value="C:Golgi membrane"/>
    <property type="evidence" value="ECO:0007669"/>
    <property type="project" value="UniProtKB-SubCell"/>
</dbReference>
<dbReference type="GO" id="GO:0000033">
    <property type="term" value="F:alpha-1,3-mannosyltransferase activity"/>
    <property type="evidence" value="ECO:0000318"/>
    <property type="project" value="GO_Central"/>
</dbReference>
<dbReference type="GO" id="GO:0046354">
    <property type="term" value="P:mannan biosynthetic process"/>
    <property type="evidence" value="ECO:0007669"/>
    <property type="project" value="UniProtKB-ARBA"/>
</dbReference>
<dbReference type="GO" id="GO:0035268">
    <property type="term" value="P:protein mannosylation"/>
    <property type="evidence" value="ECO:0007669"/>
    <property type="project" value="UniProtKB-ARBA"/>
</dbReference>
<dbReference type="GO" id="GO:0006493">
    <property type="term" value="P:protein O-linked glycosylation"/>
    <property type="evidence" value="ECO:0000318"/>
    <property type="project" value="GO_Central"/>
</dbReference>
<dbReference type="Gene3D" id="3.90.550.10">
    <property type="entry name" value="Spore Coat Polysaccharide Biosynthesis Protein SpsA, Chain A"/>
    <property type="match status" value="1"/>
</dbReference>
<dbReference type="InterPro" id="IPR022751">
    <property type="entry name" value="Alpha_mannosyltransferase"/>
</dbReference>
<dbReference type="InterPro" id="IPR029044">
    <property type="entry name" value="Nucleotide-diphossugar_trans"/>
</dbReference>
<dbReference type="PANTHER" id="PTHR31392">
    <property type="entry name" value="ALPHA-1,3-MANNOSYLTRANSFERASE MNN1-RELATED"/>
    <property type="match status" value="1"/>
</dbReference>
<dbReference type="PANTHER" id="PTHR31392:SF1">
    <property type="entry name" value="ALPHA-1,3-MANNOSYLTRANSFERASE MNN1-RELATED"/>
    <property type="match status" value="1"/>
</dbReference>
<dbReference type="Pfam" id="PF11051">
    <property type="entry name" value="Mannosyl_trans3"/>
    <property type="match status" value="1"/>
</dbReference>
<dbReference type="SUPFAM" id="SSF53448">
    <property type="entry name" value="Nucleotide-diphospho-sugar transferases"/>
    <property type="match status" value="1"/>
</dbReference>